<feature type="chain" id="PRO_0000181889" description="Ribosome maturation factor RimP">
    <location>
        <begin position="1"/>
        <end position="168"/>
    </location>
</feature>
<evidence type="ECO:0000255" key="1">
    <source>
        <dbReference type="HAMAP-Rule" id="MF_01077"/>
    </source>
</evidence>
<reference key="1">
    <citation type="journal article" date="2004" name="Genome Res.">
        <title>The complete genome and proteome of Mycoplasma mobile.</title>
        <authorList>
            <person name="Jaffe J.D."/>
            <person name="Stange-Thomann N."/>
            <person name="Smith C."/>
            <person name="DeCaprio D."/>
            <person name="Fisher S."/>
            <person name="Butler J."/>
            <person name="Calvo S."/>
            <person name="Elkins T."/>
            <person name="FitzGerald M.G."/>
            <person name="Hafez N."/>
            <person name="Kodira C.D."/>
            <person name="Major J."/>
            <person name="Wang S."/>
            <person name="Wilkinson J."/>
            <person name="Nicol R."/>
            <person name="Nusbaum C."/>
            <person name="Birren B."/>
            <person name="Berg H.C."/>
            <person name="Church G.M."/>
        </authorList>
    </citation>
    <scope>NUCLEOTIDE SEQUENCE [LARGE SCALE GENOMIC DNA]</scope>
    <source>
        <strain>ATCC 43663 / NCTC 11711 / 163 K</strain>
    </source>
</reference>
<name>RIMP_MYCM1</name>
<protein>
    <recommendedName>
        <fullName evidence="1">Ribosome maturation factor RimP</fullName>
    </recommendedName>
</protein>
<accession>Q6KIE1</accession>
<organism>
    <name type="scientific">Mycoplasma mobile (strain ATCC 43663 / 163K / NCTC 11711)</name>
    <name type="common">Mesomycoplasma mobile</name>
    <dbReference type="NCBI Taxonomy" id="267748"/>
    <lineage>
        <taxon>Bacteria</taxon>
        <taxon>Bacillati</taxon>
        <taxon>Mycoplasmatota</taxon>
        <taxon>Mycoplasmoidales</taxon>
        <taxon>Metamycoplasmataceae</taxon>
        <taxon>Mesomycoplasma</taxon>
    </lineage>
</organism>
<sequence>MFFANIEKHSNFTYYILFFKFCKIRGELVTYKEKLLEKYPDLIYEITWTKEKDDSFLQITLNENNLEKITEYSKEISNILDNYEKELPSKYFLDISSRGINLSIQKENLDNYLEKYIEISLVNETKKIKGILWEIKNETIILKVNFKGQFRKIEYKKNNINLIEEVIK</sequence>
<comment type="function">
    <text evidence="1">Required for maturation of 30S ribosomal subunits.</text>
</comment>
<comment type="subcellular location">
    <subcellularLocation>
        <location evidence="1">Cytoplasm</location>
    </subcellularLocation>
</comment>
<comment type="similarity">
    <text evidence="1">Belongs to the RimP family.</text>
</comment>
<dbReference type="EMBL" id="AE017308">
    <property type="protein sequence ID" value="AAT27635.1"/>
    <property type="molecule type" value="Genomic_DNA"/>
</dbReference>
<dbReference type="SMR" id="Q6KIE1"/>
<dbReference type="STRING" id="267748.MMOB1490"/>
<dbReference type="KEGG" id="mmo:MMOB1490"/>
<dbReference type="HOGENOM" id="CLU_1584676_0_0_14"/>
<dbReference type="OrthoDB" id="399086at2"/>
<dbReference type="Proteomes" id="UP000009072">
    <property type="component" value="Chromosome"/>
</dbReference>
<dbReference type="GO" id="GO:0005737">
    <property type="term" value="C:cytoplasm"/>
    <property type="evidence" value="ECO:0007669"/>
    <property type="project" value="UniProtKB-SubCell"/>
</dbReference>
<dbReference type="GO" id="GO:0042274">
    <property type="term" value="P:ribosomal small subunit biogenesis"/>
    <property type="evidence" value="ECO:0007669"/>
    <property type="project" value="UniProtKB-UniRule"/>
</dbReference>
<dbReference type="Gene3D" id="3.30.300.70">
    <property type="entry name" value="RimP-like superfamily, N-terminal"/>
    <property type="match status" value="1"/>
</dbReference>
<dbReference type="HAMAP" id="MF_01077">
    <property type="entry name" value="RimP"/>
    <property type="match status" value="1"/>
</dbReference>
<dbReference type="InterPro" id="IPR003728">
    <property type="entry name" value="Ribosome_maturation_RimP"/>
</dbReference>
<dbReference type="InterPro" id="IPR036847">
    <property type="entry name" value="RimP_C_sf"/>
</dbReference>
<dbReference type="InterPro" id="IPR028989">
    <property type="entry name" value="RimP_N"/>
</dbReference>
<dbReference type="InterPro" id="IPR035956">
    <property type="entry name" value="RimP_N_sf"/>
</dbReference>
<dbReference type="Pfam" id="PF02576">
    <property type="entry name" value="RimP_N"/>
    <property type="match status" value="1"/>
</dbReference>
<dbReference type="SUPFAM" id="SSF74942">
    <property type="entry name" value="YhbC-like, C-terminal domain"/>
    <property type="match status" value="1"/>
</dbReference>
<dbReference type="SUPFAM" id="SSF75420">
    <property type="entry name" value="YhbC-like, N-terminal domain"/>
    <property type="match status" value="1"/>
</dbReference>
<gene>
    <name evidence="1" type="primary">rimP</name>
    <name type="ordered locus">MMOB1490</name>
</gene>
<keyword id="KW-0963">Cytoplasm</keyword>
<keyword id="KW-1185">Reference proteome</keyword>
<keyword id="KW-0690">Ribosome biogenesis</keyword>
<proteinExistence type="inferred from homology"/>